<evidence type="ECO:0000255" key="1">
    <source>
        <dbReference type="HAMAP-Rule" id="MF_01516"/>
    </source>
</evidence>
<organism>
    <name type="scientific">Enterobacter sp. (strain 638)</name>
    <dbReference type="NCBI Taxonomy" id="399742"/>
    <lineage>
        <taxon>Bacteria</taxon>
        <taxon>Pseudomonadati</taxon>
        <taxon>Pseudomonadota</taxon>
        <taxon>Gammaproteobacteria</taxon>
        <taxon>Enterobacterales</taxon>
        <taxon>Enterobacteriaceae</taxon>
        <taxon>Enterobacter</taxon>
    </lineage>
</organism>
<dbReference type="EC" id="1.1.1.37" evidence="1"/>
<dbReference type="EMBL" id="CP000653">
    <property type="protein sequence ID" value="ABP62328.1"/>
    <property type="molecule type" value="Genomic_DNA"/>
</dbReference>
<dbReference type="RefSeq" id="WP_015960651.1">
    <property type="nucleotide sequence ID" value="NC_009436.1"/>
</dbReference>
<dbReference type="SMR" id="A4WF48"/>
<dbReference type="STRING" id="399742.Ent638_3671"/>
<dbReference type="GeneID" id="93306640"/>
<dbReference type="KEGG" id="ent:Ent638_3671"/>
<dbReference type="eggNOG" id="COG0039">
    <property type="taxonomic scope" value="Bacteria"/>
</dbReference>
<dbReference type="HOGENOM" id="CLU_047181_1_0_6"/>
<dbReference type="OrthoDB" id="9802969at2"/>
<dbReference type="Proteomes" id="UP000000230">
    <property type="component" value="Chromosome"/>
</dbReference>
<dbReference type="GO" id="GO:0005737">
    <property type="term" value="C:cytoplasm"/>
    <property type="evidence" value="ECO:0007669"/>
    <property type="project" value="TreeGrafter"/>
</dbReference>
<dbReference type="GO" id="GO:0030060">
    <property type="term" value="F:L-malate dehydrogenase (NAD+) activity"/>
    <property type="evidence" value="ECO:0007669"/>
    <property type="project" value="UniProtKB-UniRule"/>
</dbReference>
<dbReference type="GO" id="GO:0006108">
    <property type="term" value="P:malate metabolic process"/>
    <property type="evidence" value="ECO:0007669"/>
    <property type="project" value="InterPro"/>
</dbReference>
<dbReference type="GO" id="GO:0006099">
    <property type="term" value="P:tricarboxylic acid cycle"/>
    <property type="evidence" value="ECO:0007669"/>
    <property type="project" value="UniProtKB-UniRule"/>
</dbReference>
<dbReference type="CDD" id="cd01337">
    <property type="entry name" value="MDH_glyoxysomal_mitochondrial"/>
    <property type="match status" value="1"/>
</dbReference>
<dbReference type="FunFam" id="3.40.50.720:FF:000017">
    <property type="entry name" value="Malate dehydrogenase"/>
    <property type="match status" value="1"/>
</dbReference>
<dbReference type="FunFam" id="3.90.110.10:FF:000001">
    <property type="entry name" value="Malate dehydrogenase"/>
    <property type="match status" value="1"/>
</dbReference>
<dbReference type="Gene3D" id="3.90.110.10">
    <property type="entry name" value="Lactate dehydrogenase/glycoside hydrolase, family 4, C-terminal"/>
    <property type="match status" value="1"/>
</dbReference>
<dbReference type="Gene3D" id="3.40.50.720">
    <property type="entry name" value="NAD(P)-binding Rossmann-like Domain"/>
    <property type="match status" value="1"/>
</dbReference>
<dbReference type="HAMAP" id="MF_01516">
    <property type="entry name" value="Malate_dehydrog_1"/>
    <property type="match status" value="1"/>
</dbReference>
<dbReference type="InterPro" id="IPR001557">
    <property type="entry name" value="L-lactate/malate_DH"/>
</dbReference>
<dbReference type="InterPro" id="IPR022383">
    <property type="entry name" value="Lactate/malate_DH_C"/>
</dbReference>
<dbReference type="InterPro" id="IPR001236">
    <property type="entry name" value="Lactate/malate_DH_N"/>
</dbReference>
<dbReference type="InterPro" id="IPR015955">
    <property type="entry name" value="Lactate_DH/Glyco_Ohase_4_C"/>
</dbReference>
<dbReference type="InterPro" id="IPR001252">
    <property type="entry name" value="Malate_DH_AS"/>
</dbReference>
<dbReference type="InterPro" id="IPR010097">
    <property type="entry name" value="Malate_DH_type1"/>
</dbReference>
<dbReference type="InterPro" id="IPR023958">
    <property type="entry name" value="Malate_DH_type1_bac"/>
</dbReference>
<dbReference type="InterPro" id="IPR036291">
    <property type="entry name" value="NAD(P)-bd_dom_sf"/>
</dbReference>
<dbReference type="NCBIfam" id="TIGR01772">
    <property type="entry name" value="MDH_euk_gproteo"/>
    <property type="match status" value="1"/>
</dbReference>
<dbReference type="PANTHER" id="PTHR11540">
    <property type="entry name" value="MALATE AND LACTATE DEHYDROGENASE"/>
    <property type="match status" value="1"/>
</dbReference>
<dbReference type="PANTHER" id="PTHR11540:SF16">
    <property type="entry name" value="MALATE DEHYDROGENASE, MITOCHONDRIAL"/>
    <property type="match status" value="1"/>
</dbReference>
<dbReference type="Pfam" id="PF02866">
    <property type="entry name" value="Ldh_1_C"/>
    <property type="match status" value="1"/>
</dbReference>
<dbReference type="Pfam" id="PF00056">
    <property type="entry name" value="Ldh_1_N"/>
    <property type="match status" value="1"/>
</dbReference>
<dbReference type="PIRSF" id="PIRSF000102">
    <property type="entry name" value="Lac_mal_DH"/>
    <property type="match status" value="1"/>
</dbReference>
<dbReference type="SUPFAM" id="SSF56327">
    <property type="entry name" value="LDH C-terminal domain-like"/>
    <property type="match status" value="1"/>
</dbReference>
<dbReference type="SUPFAM" id="SSF51735">
    <property type="entry name" value="NAD(P)-binding Rossmann-fold domains"/>
    <property type="match status" value="1"/>
</dbReference>
<dbReference type="PROSITE" id="PS00068">
    <property type="entry name" value="MDH"/>
    <property type="match status" value="1"/>
</dbReference>
<name>MDH_ENT38</name>
<protein>
    <recommendedName>
        <fullName evidence="1">Malate dehydrogenase</fullName>
        <ecNumber evidence="1">1.1.1.37</ecNumber>
    </recommendedName>
</protein>
<sequence length="312" mass="32432">MKVAVLGAAGGIGQALALLLKTQLPSGSELSLYDIAPVTPGVAVDLSHIPTAVKIKGFSGENARPALEGADVVLISAGVARKPGMDRSDLFNVNAGIVKNLVQQIAETCPKACVGIITNPVNTTVAIAAEVLKKAGVYDKNKLFGVTTLDIIRSNTFVAELKGKSPSDIEVPVIGGHSGVTILPLLSQIPGVSFSEQEVADLTKRIQNAGTEVVEAKAGGGSATLSMGQAAARFGLSLVRALQGEKGVVECAYVEGDGEHARFFSQPLLLGKNGIEERQSIGKLSAFEQQAMEGMLDTLKKDITLGEEFVSK</sequence>
<accession>A4WF48</accession>
<feature type="chain" id="PRO_1000068587" description="Malate dehydrogenase">
    <location>
        <begin position="1"/>
        <end position="312"/>
    </location>
</feature>
<feature type="active site" description="Proton acceptor" evidence="1">
    <location>
        <position position="177"/>
    </location>
</feature>
<feature type="binding site" evidence="1">
    <location>
        <begin position="7"/>
        <end position="13"/>
    </location>
    <ligand>
        <name>NAD(+)</name>
        <dbReference type="ChEBI" id="CHEBI:57540"/>
    </ligand>
</feature>
<feature type="binding site" evidence="1">
    <location>
        <position position="34"/>
    </location>
    <ligand>
        <name>NAD(+)</name>
        <dbReference type="ChEBI" id="CHEBI:57540"/>
    </ligand>
</feature>
<feature type="binding site" evidence="1">
    <location>
        <position position="81"/>
    </location>
    <ligand>
        <name>substrate</name>
    </ligand>
</feature>
<feature type="binding site" evidence="1">
    <location>
        <position position="87"/>
    </location>
    <ligand>
        <name>substrate</name>
    </ligand>
</feature>
<feature type="binding site" evidence="1">
    <location>
        <position position="94"/>
    </location>
    <ligand>
        <name>NAD(+)</name>
        <dbReference type="ChEBI" id="CHEBI:57540"/>
    </ligand>
</feature>
<feature type="binding site" evidence="1">
    <location>
        <begin position="117"/>
        <end position="119"/>
    </location>
    <ligand>
        <name>NAD(+)</name>
        <dbReference type="ChEBI" id="CHEBI:57540"/>
    </ligand>
</feature>
<feature type="binding site" evidence="1">
    <location>
        <position position="119"/>
    </location>
    <ligand>
        <name>substrate</name>
    </ligand>
</feature>
<feature type="binding site" evidence="1">
    <location>
        <position position="153"/>
    </location>
    <ligand>
        <name>substrate</name>
    </ligand>
</feature>
<feature type="binding site" evidence="1">
    <location>
        <position position="227"/>
    </location>
    <ligand>
        <name>NAD(+)</name>
        <dbReference type="ChEBI" id="CHEBI:57540"/>
    </ligand>
</feature>
<reference key="1">
    <citation type="journal article" date="2010" name="PLoS Genet.">
        <title>Genome sequence of the plant growth promoting endophytic bacterium Enterobacter sp. 638.</title>
        <authorList>
            <person name="Taghavi S."/>
            <person name="van der Lelie D."/>
            <person name="Hoffman A."/>
            <person name="Zhang Y.B."/>
            <person name="Walla M.D."/>
            <person name="Vangronsveld J."/>
            <person name="Newman L."/>
            <person name="Monchy S."/>
        </authorList>
    </citation>
    <scope>NUCLEOTIDE SEQUENCE [LARGE SCALE GENOMIC DNA]</scope>
    <source>
        <strain>638</strain>
    </source>
</reference>
<proteinExistence type="inferred from homology"/>
<gene>
    <name evidence="1" type="primary">mdh</name>
    <name type="ordered locus">Ent638_3671</name>
</gene>
<keyword id="KW-0520">NAD</keyword>
<keyword id="KW-0560">Oxidoreductase</keyword>
<keyword id="KW-0816">Tricarboxylic acid cycle</keyword>
<comment type="function">
    <text evidence="1">Catalyzes the reversible oxidation of malate to oxaloacetate.</text>
</comment>
<comment type="catalytic activity">
    <reaction evidence="1">
        <text>(S)-malate + NAD(+) = oxaloacetate + NADH + H(+)</text>
        <dbReference type="Rhea" id="RHEA:21432"/>
        <dbReference type="ChEBI" id="CHEBI:15378"/>
        <dbReference type="ChEBI" id="CHEBI:15589"/>
        <dbReference type="ChEBI" id="CHEBI:16452"/>
        <dbReference type="ChEBI" id="CHEBI:57540"/>
        <dbReference type="ChEBI" id="CHEBI:57945"/>
        <dbReference type="EC" id="1.1.1.37"/>
    </reaction>
</comment>
<comment type="subunit">
    <text evidence="1">Homodimer.</text>
</comment>
<comment type="similarity">
    <text evidence="1">Belongs to the LDH/MDH superfamily. MDH type 1 family.</text>
</comment>